<keyword id="KW-0963">Cytoplasm</keyword>
<keyword id="KW-0460">Magnesium</keyword>
<keyword id="KW-0479">Metal-binding</keyword>
<keyword id="KW-0548">Nucleotidyltransferase</keyword>
<keyword id="KW-0694">RNA-binding</keyword>
<keyword id="KW-0808">Transferase</keyword>
<dbReference type="EC" id="2.7.7.8" evidence="1"/>
<dbReference type="EMBL" id="CP000087">
    <property type="protein sequence ID" value="ABE04854.1"/>
    <property type="molecule type" value="Genomic_DNA"/>
</dbReference>
<dbReference type="RefSeq" id="WP_011477441.1">
    <property type="nucleotide sequence ID" value="NC_007940.1"/>
</dbReference>
<dbReference type="SMR" id="Q1RIG0"/>
<dbReference type="KEGG" id="rbe:RBE_0773"/>
<dbReference type="eggNOG" id="COG1185">
    <property type="taxonomic scope" value="Bacteria"/>
</dbReference>
<dbReference type="HOGENOM" id="CLU_004217_2_2_5"/>
<dbReference type="OrthoDB" id="9804305at2"/>
<dbReference type="Proteomes" id="UP000001951">
    <property type="component" value="Chromosome"/>
</dbReference>
<dbReference type="GO" id="GO:0005829">
    <property type="term" value="C:cytosol"/>
    <property type="evidence" value="ECO:0007669"/>
    <property type="project" value="TreeGrafter"/>
</dbReference>
<dbReference type="GO" id="GO:0000175">
    <property type="term" value="F:3'-5'-RNA exonuclease activity"/>
    <property type="evidence" value="ECO:0007669"/>
    <property type="project" value="TreeGrafter"/>
</dbReference>
<dbReference type="GO" id="GO:0000287">
    <property type="term" value="F:magnesium ion binding"/>
    <property type="evidence" value="ECO:0007669"/>
    <property type="project" value="UniProtKB-UniRule"/>
</dbReference>
<dbReference type="GO" id="GO:0004654">
    <property type="term" value="F:polyribonucleotide nucleotidyltransferase activity"/>
    <property type="evidence" value="ECO:0007669"/>
    <property type="project" value="UniProtKB-UniRule"/>
</dbReference>
<dbReference type="GO" id="GO:0003723">
    <property type="term" value="F:RNA binding"/>
    <property type="evidence" value="ECO:0007669"/>
    <property type="project" value="UniProtKB-UniRule"/>
</dbReference>
<dbReference type="GO" id="GO:0006402">
    <property type="term" value="P:mRNA catabolic process"/>
    <property type="evidence" value="ECO:0007669"/>
    <property type="project" value="UniProtKB-UniRule"/>
</dbReference>
<dbReference type="GO" id="GO:0006396">
    <property type="term" value="P:RNA processing"/>
    <property type="evidence" value="ECO:0007669"/>
    <property type="project" value="InterPro"/>
</dbReference>
<dbReference type="CDD" id="cd02393">
    <property type="entry name" value="KH-I_PNPase"/>
    <property type="match status" value="1"/>
</dbReference>
<dbReference type="CDD" id="cd11363">
    <property type="entry name" value="RNase_PH_PNPase_1"/>
    <property type="match status" value="1"/>
</dbReference>
<dbReference type="CDD" id="cd11364">
    <property type="entry name" value="RNase_PH_PNPase_2"/>
    <property type="match status" value="1"/>
</dbReference>
<dbReference type="CDD" id="cd04472">
    <property type="entry name" value="S1_PNPase"/>
    <property type="match status" value="1"/>
</dbReference>
<dbReference type="FunFam" id="3.30.1370.10:FF:000001">
    <property type="entry name" value="Polyribonucleotide nucleotidyltransferase"/>
    <property type="match status" value="1"/>
</dbReference>
<dbReference type="FunFam" id="3.30.230.70:FF:000001">
    <property type="entry name" value="Polyribonucleotide nucleotidyltransferase"/>
    <property type="match status" value="1"/>
</dbReference>
<dbReference type="FunFam" id="3.30.230.70:FF:000002">
    <property type="entry name" value="Polyribonucleotide nucleotidyltransferase"/>
    <property type="match status" value="1"/>
</dbReference>
<dbReference type="FunFam" id="2.40.50.140:FF:000189">
    <property type="entry name" value="Polyribonucleotide nucleotidyltransferase, putative"/>
    <property type="match status" value="1"/>
</dbReference>
<dbReference type="Gene3D" id="3.30.230.70">
    <property type="entry name" value="GHMP Kinase, N-terminal domain"/>
    <property type="match status" value="2"/>
</dbReference>
<dbReference type="Gene3D" id="3.30.1370.10">
    <property type="entry name" value="K Homology domain, type 1"/>
    <property type="match status" value="1"/>
</dbReference>
<dbReference type="Gene3D" id="2.40.50.140">
    <property type="entry name" value="Nucleic acid-binding proteins"/>
    <property type="match status" value="1"/>
</dbReference>
<dbReference type="HAMAP" id="MF_01595">
    <property type="entry name" value="PNPase"/>
    <property type="match status" value="1"/>
</dbReference>
<dbReference type="InterPro" id="IPR001247">
    <property type="entry name" value="ExoRNase_PH_dom1"/>
</dbReference>
<dbReference type="InterPro" id="IPR015847">
    <property type="entry name" value="ExoRNase_PH_dom2"/>
</dbReference>
<dbReference type="InterPro" id="IPR036345">
    <property type="entry name" value="ExoRNase_PH_dom2_sf"/>
</dbReference>
<dbReference type="InterPro" id="IPR004087">
    <property type="entry name" value="KH_dom"/>
</dbReference>
<dbReference type="InterPro" id="IPR004088">
    <property type="entry name" value="KH_dom_type_1"/>
</dbReference>
<dbReference type="InterPro" id="IPR036612">
    <property type="entry name" value="KH_dom_type_1_sf"/>
</dbReference>
<dbReference type="InterPro" id="IPR012340">
    <property type="entry name" value="NA-bd_OB-fold"/>
</dbReference>
<dbReference type="InterPro" id="IPR012162">
    <property type="entry name" value="PNPase"/>
</dbReference>
<dbReference type="InterPro" id="IPR027408">
    <property type="entry name" value="PNPase/RNase_PH_dom_sf"/>
</dbReference>
<dbReference type="InterPro" id="IPR015848">
    <property type="entry name" value="PNPase_PH_RNA-bd_bac/org-type"/>
</dbReference>
<dbReference type="InterPro" id="IPR036456">
    <property type="entry name" value="PNPase_PH_RNA-bd_sf"/>
</dbReference>
<dbReference type="InterPro" id="IPR020568">
    <property type="entry name" value="Ribosomal_Su5_D2-typ_SF"/>
</dbReference>
<dbReference type="InterPro" id="IPR003029">
    <property type="entry name" value="S1_domain"/>
</dbReference>
<dbReference type="NCBIfam" id="TIGR03591">
    <property type="entry name" value="polynuc_phos"/>
    <property type="match status" value="1"/>
</dbReference>
<dbReference type="NCBIfam" id="NF008805">
    <property type="entry name" value="PRK11824.1"/>
    <property type="match status" value="1"/>
</dbReference>
<dbReference type="PANTHER" id="PTHR11252">
    <property type="entry name" value="POLYRIBONUCLEOTIDE NUCLEOTIDYLTRANSFERASE"/>
    <property type="match status" value="1"/>
</dbReference>
<dbReference type="PANTHER" id="PTHR11252:SF0">
    <property type="entry name" value="POLYRIBONUCLEOTIDE NUCLEOTIDYLTRANSFERASE 1, MITOCHONDRIAL"/>
    <property type="match status" value="1"/>
</dbReference>
<dbReference type="Pfam" id="PF00013">
    <property type="entry name" value="KH_1"/>
    <property type="match status" value="1"/>
</dbReference>
<dbReference type="Pfam" id="PF03726">
    <property type="entry name" value="PNPase"/>
    <property type="match status" value="1"/>
</dbReference>
<dbReference type="Pfam" id="PF01138">
    <property type="entry name" value="RNase_PH"/>
    <property type="match status" value="2"/>
</dbReference>
<dbReference type="Pfam" id="PF03725">
    <property type="entry name" value="RNase_PH_C"/>
    <property type="match status" value="1"/>
</dbReference>
<dbReference type="Pfam" id="PF00575">
    <property type="entry name" value="S1"/>
    <property type="match status" value="1"/>
</dbReference>
<dbReference type="PIRSF" id="PIRSF005499">
    <property type="entry name" value="PNPase"/>
    <property type="match status" value="1"/>
</dbReference>
<dbReference type="SMART" id="SM00322">
    <property type="entry name" value="KH"/>
    <property type="match status" value="1"/>
</dbReference>
<dbReference type="SMART" id="SM00316">
    <property type="entry name" value="S1"/>
    <property type="match status" value="1"/>
</dbReference>
<dbReference type="SUPFAM" id="SSF54791">
    <property type="entry name" value="Eukaryotic type KH-domain (KH-domain type I)"/>
    <property type="match status" value="1"/>
</dbReference>
<dbReference type="SUPFAM" id="SSF50249">
    <property type="entry name" value="Nucleic acid-binding proteins"/>
    <property type="match status" value="1"/>
</dbReference>
<dbReference type="SUPFAM" id="SSF46915">
    <property type="entry name" value="Polynucleotide phosphorylase/guanosine pentaphosphate synthase (PNPase/GPSI), domain 3"/>
    <property type="match status" value="1"/>
</dbReference>
<dbReference type="SUPFAM" id="SSF55666">
    <property type="entry name" value="Ribonuclease PH domain 2-like"/>
    <property type="match status" value="2"/>
</dbReference>
<dbReference type="SUPFAM" id="SSF54211">
    <property type="entry name" value="Ribosomal protein S5 domain 2-like"/>
    <property type="match status" value="2"/>
</dbReference>
<dbReference type="PROSITE" id="PS50084">
    <property type="entry name" value="KH_TYPE_1"/>
    <property type="match status" value="1"/>
</dbReference>
<dbReference type="PROSITE" id="PS50126">
    <property type="entry name" value="S1"/>
    <property type="match status" value="1"/>
</dbReference>
<sequence length="744" mass="81697">MFNEIIKTVEWGGKTLELSTGKIARQADGAVTVKMGNSVLLCTAVTAAKAKEGIGFFPLTINYREMAYAAGKIPGGFFKREGKASDREVLVSRLIDRPIRPLFHPAFVNETFVTCTVLSYDPETPVDILAIIGASAALSLSPAPYLEIVAASKVGLINGEFFLHPTLDLLKTSQLDLVVAGTNDSVMMVESEAHLLSEEQMLAAVKFGFDSFQPVVNIIKELAAEAKKSKLEMQDLYPAELKNEIKKLFAKEIEQTFAIKSKQERSTNLELIPEKVLKHFADDIESKKYNNYQIESALKSVESDILRGNILQKNKRIDGRTTTDIRQITCEVGLLPCAHGSALFTRGETQSLVSSTFGTSLDEQIIDSLEGEYKERFMLNYIFPPYSVNEAMPMKAPGRREVGHGKLAWRAVNPVLPTKTQFPYSIRVVAETTESNGSSSMATVCGSSLALMYAGVPIKAPVAGIAMGLVKEDEKFAVLSDILGDEDYFGDMDFKVAGTSEGITALQMDIKIRGVNFEIMKIALEQARLGRLHILEQMNKVISKPNNEMSKNAPSTTTLKVDKDKIRDIIGPGGKVIKEICETSGAKIDISDDGTVSIYASDKDKLKVALDKVKAIAIEPEIGEVFNGTVMKILDSGAFVNYLGNKDGFVHISEIAEERIESVGSVLKQGDIVKVKLIGFDNKGKAKLTIKNAEKDKSSANPKPKNSPKEHQEPEKRDNGKKRAWNEDNNAETTEVVTERKYFS</sequence>
<organism>
    <name type="scientific">Rickettsia bellii (strain RML369-C)</name>
    <dbReference type="NCBI Taxonomy" id="336407"/>
    <lineage>
        <taxon>Bacteria</taxon>
        <taxon>Pseudomonadati</taxon>
        <taxon>Pseudomonadota</taxon>
        <taxon>Alphaproteobacteria</taxon>
        <taxon>Rickettsiales</taxon>
        <taxon>Rickettsiaceae</taxon>
        <taxon>Rickettsieae</taxon>
        <taxon>Rickettsia</taxon>
        <taxon>belli group</taxon>
    </lineage>
</organism>
<evidence type="ECO:0000255" key="1">
    <source>
        <dbReference type="HAMAP-Rule" id="MF_01595"/>
    </source>
</evidence>
<evidence type="ECO:0000256" key="2">
    <source>
        <dbReference type="SAM" id="MobiDB-lite"/>
    </source>
</evidence>
<gene>
    <name evidence="1" type="primary">pnp</name>
    <name type="ordered locus">RBE_0773</name>
</gene>
<accession>Q1RIG0</accession>
<proteinExistence type="inferred from homology"/>
<reference key="1">
    <citation type="journal article" date="2006" name="PLoS Genet.">
        <title>Genome sequence of Rickettsia bellii illuminates the role of amoebae in gene exchanges between intracellular pathogens.</title>
        <authorList>
            <person name="Ogata H."/>
            <person name="La Scola B."/>
            <person name="Audic S."/>
            <person name="Renesto P."/>
            <person name="Blanc G."/>
            <person name="Robert C."/>
            <person name="Fournier P.-E."/>
            <person name="Claverie J.-M."/>
            <person name="Raoult D."/>
        </authorList>
    </citation>
    <scope>NUCLEOTIDE SEQUENCE [LARGE SCALE GENOMIC DNA]</scope>
    <source>
        <strain>RML369-C</strain>
    </source>
</reference>
<comment type="function">
    <text evidence="1">Involved in mRNA degradation. Catalyzes the phosphorolysis of single-stranded polyribonucleotides processively in the 3'- to 5'-direction.</text>
</comment>
<comment type="catalytic activity">
    <reaction evidence="1">
        <text>RNA(n+1) + phosphate = RNA(n) + a ribonucleoside 5'-diphosphate</text>
        <dbReference type="Rhea" id="RHEA:22096"/>
        <dbReference type="Rhea" id="RHEA-COMP:14527"/>
        <dbReference type="Rhea" id="RHEA-COMP:17342"/>
        <dbReference type="ChEBI" id="CHEBI:43474"/>
        <dbReference type="ChEBI" id="CHEBI:57930"/>
        <dbReference type="ChEBI" id="CHEBI:140395"/>
        <dbReference type="EC" id="2.7.7.8"/>
    </reaction>
</comment>
<comment type="cofactor">
    <cofactor evidence="1">
        <name>Mg(2+)</name>
        <dbReference type="ChEBI" id="CHEBI:18420"/>
    </cofactor>
</comment>
<comment type="subcellular location">
    <subcellularLocation>
        <location evidence="1">Cytoplasm</location>
    </subcellularLocation>
</comment>
<comment type="similarity">
    <text evidence="1">Belongs to the polyribonucleotide nucleotidyltransferase family.</text>
</comment>
<name>PNP_RICBR</name>
<feature type="chain" id="PRO_0000289280" description="Polyribonucleotide nucleotidyltransferase">
    <location>
        <begin position="1"/>
        <end position="744"/>
    </location>
</feature>
<feature type="domain" description="KH" evidence="1">
    <location>
        <begin position="554"/>
        <end position="613"/>
    </location>
</feature>
<feature type="domain" description="S1 motif" evidence="1">
    <location>
        <begin position="623"/>
        <end position="691"/>
    </location>
</feature>
<feature type="region of interest" description="Disordered" evidence="2">
    <location>
        <begin position="691"/>
        <end position="744"/>
    </location>
</feature>
<feature type="compositionally biased region" description="Basic and acidic residues" evidence="2">
    <location>
        <begin position="707"/>
        <end position="718"/>
    </location>
</feature>
<feature type="compositionally biased region" description="Polar residues" evidence="2">
    <location>
        <begin position="727"/>
        <end position="736"/>
    </location>
</feature>
<feature type="binding site" evidence="1">
    <location>
        <position position="487"/>
    </location>
    <ligand>
        <name>Mg(2+)</name>
        <dbReference type="ChEBI" id="CHEBI:18420"/>
    </ligand>
</feature>
<feature type="binding site" evidence="1">
    <location>
        <position position="493"/>
    </location>
    <ligand>
        <name>Mg(2+)</name>
        <dbReference type="ChEBI" id="CHEBI:18420"/>
    </ligand>
</feature>
<protein>
    <recommendedName>
        <fullName evidence="1">Polyribonucleotide nucleotidyltransferase</fullName>
        <ecNumber evidence="1">2.7.7.8</ecNumber>
    </recommendedName>
    <alternativeName>
        <fullName evidence="1">Polynucleotide phosphorylase</fullName>
        <shortName evidence="1">PNPase</shortName>
    </alternativeName>
</protein>